<dbReference type="EC" id="2.4.1.250" evidence="1"/>
<dbReference type="EMBL" id="CP000667">
    <property type="protein sequence ID" value="ABP52816.1"/>
    <property type="molecule type" value="Genomic_DNA"/>
</dbReference>
<dbReference type="SMR" id="A4X1R6"/>
<dbReference type="STRING" id="369723.Strop_0331"/>
<dbReference type="CAZy" id="GT4">
    <property type="family name" value="Glycosyltransferase Family 4"/>
</dbReference>
<dbReference type="KEGG" id="stp:Strop_0331"/>
<dbReference type="eggNOG" id="COG0438">
    <property type="taxonomic scope" value="Bacteria"/>
</dbReference>
<dbReference type="HOGENOM" id="CLU_009583_2_3_11"/>
<dbReference type="Proteomes" id="UP000000235">
    <property type="component" value="Chromosome"/>
</dbReference>
<dbReference type="GO" id="GO:0008375">
    <property type="term" value="F:acetylglucosaminyltransferase activity"/>
    <property type="evidence" value="ECO:0007669"/>
    <property type="project" value="UniProtKB-UniRule"/>
</dbReference>
<dbReference type="GO" id="GO:0102710">
    <property type="term" value="F:D-inositol-3-phosphate glycosyltransferase activity"/>
    <property type="evidence" value="ECO:0007669"/>
    <property type="project" value="UniProtKB-EC"/>
</dbReference>
<dbReference type="GO" id="GO:0000287">
    <property type="term" value="F:magnesium ion binding"/>
    <property type="evidence" value="ECO:0007669"/>
    <property type="project" value="UniProtKB-UniRule"/>
</dbReference>
<dbReference type="GO" id="GO:0010125">
    <property type="term" value="P:mycothiol biosynthetic process"/>
    <property type="evidence" value="ECO:0007669"/>
    <property type="project" value="UniProtKB-UniRule"/>
</dbReference>
<dbReference type="CDD" id="cd03800">
    <property type="entry name" value="GT4_sucrose_synthase"/>
    <property type="match status" value="1"/>
</dbReference>
<dbReference type="Gene3D" id="3.40.50.2000">
    <property type="entry name" value="Glycogen Phosphorylase B"/>
    <property type="match status" value="2"/>
</dbReference>
<dbReference type="HAMAP" id="MF_01695">
    <property type="entry name" value="MshA"/>
    <property type="match status" value="1"/>
</dbReference>
<dbReference type="InterPro" id="IPR001296">
    <property type="entry name" value="Glyco_trans_1"/>
</dbReference>
<dbReference type="InterPro" id="IPR028098">
    <property type="entry name" value="Glyco_trans_4-like_N"/>
</dbReference>
<dbReference type="InterPro" id="IPR017814">
    <property type="entry name" value="Mycothiol_biosynthesis_MshA"/>
</dbReference>
<dbReference type="NCBIfam" id="TIGR03449">
    <property type="entry name" value="mycothiol_MshA"/>
    <property type="match status" value="1"/>
</dbReference>
<dbReference type="PANTHER" id="PTHR12526:SF510">
    <property type="entry name" value="D-INOSITOL 3-PHOSPHATE GLYCOSYLTRANSFERASE"/>
    <property type="match status" value="1"/>
</dbReference>
<dbReference type="PANTHER" id="PTHR12526">
    <property type="entry name" value="GLYCOSYLTRANSFERASE"/>
    <property type="match status" value="1"/>
</dbReference>
<dbReference type="Pfam" id="PF13579">
    <property type="entry name" value="Glyco_trans_4_4"/>
    <property type="match status" value="1"/>
</dbReference>
<dbReference type="Pfam" id="PF00534">
    <property type="entry name" value="Glycos_transf_1"/>
    <property type="match status" value="1"/>
</dbReference>
<dbReference type="SUPFAM" id="SSF53756">
    <property type="entry name" value="UDP-Glycosyltransferase/glycogen phosphorylase"/>
    <property type="match status" value="1"/>
</dbReference>
<comment type="function">
    <text evidence="1">Catalyzes the transfer of a N-acetyl-glucosamine moiety to 1D-myo-inositol 3-phosphate to produce 1D-myo-inositol 2-acetamido-2-deoxy-glucopyranoside 3-phosphate in the mycothiol biosynthesis pathway.</text>
</comment>
<comment type="catalytic activity">
    <reaction evidence="1">
        <text>1D-myo-inositol 3-phosphate + UDP-N-acetyl-alpha-D-glucosamine = 1D-myo-inositol 2-acetamido-2-deoxy-alpha-D-glucopyranoside 3-phosphate + UDP + H(+)</text>
        <dbReference type="Rhea" id="RHEA:26188"/>
        <dbReference type="ChEBI" id="CHEBI:15378"/>
        <dbReference type="ChEBI" id="CHEBI:57705"/>
        <dbReference type="ChEBI" id="CHEBI:58223"/>
        <dbReference type="ChEBI" id="CHEBI:58401"/>
        <dbReference type="ChEBI" id="CHEBI:58892"/>
        <dbReference type="EC" id="2.4.1.250"/>
    </reaction>
</comment>
<comment type="subunit">
    <text evidence="1">Homodimer.</text>
</comment>
<comment type="similarity">
    <text evidence="1">Belongs to the glycosyltransferase group 1 family. MshA subfamily.</text>
</comment>
<keyword id="KW-0328">Glycosyltransferase</keyword>
<keyword id="KW-0460">Magnesium</keyword>
<keyword id="KW-0479">Metal-binding</keyword>
<keyword id="KW-1185">Reference proteome</keyword>
<keyword id="KW-0808">Transferase</keyword>
<gene>
    <name evidence="1" type="primary">mshA</name>
    <name type="ordered locus">Strop_0331</name>
</gene>
<proteinExistence type="inferred from homology"/>
<sequence length="482" mass="51686">MRNYRSPIGKMTPGVEVDREAPVVRAATVAEGADVAEQHTGVGHQRGARPWPLPRRIATLSVHTSPLHQPGTGDAGGMNVYILEVARRLAEANVEVEIFTRATAADLPPVVEMVPGVHVRHIMSGPLGGLTKEELPGQLCAFTAGVLRAEAVRAAGHYDLIHSHYWLSGQVGWLAKERWGVPLVHTAHTLAKVKNAQLAAGDRPEPKARVIGEEQVVAEADRLVANTKTEAGDLIDRYDADPTRVEVVEPGVDLARFCPASGDRARAQVLARRRLDLPERGYVVAFVGRIQPLKAPDVLIRAAAALRQRDPALADDMTVVVCGGPSGSGLERPTHLIELAAALGITDRVRFLPPQTGDDLPALYRAADLVAVPSYNESFGLVALEAQACGTPVVAAAVGGLNTAVRDEVSGVLVDGHDPVAWARSLGRLLPDAGRRAMLARGAQRHARNFSWDRTVKDLLDVYGEAVAEHRTRLSDFATCSR</sequence>
<organism>
    <name type="scientific">Salinispora tropica (strain ATCC BAA-916 / DSM 44818 / JCM 13857 / NBRC 105044 / CNB-440)</name>
    <dbReference type="NCBI Taxonomy" id="369723"/>
    <lineage>
        <taxon>Bacteria</taxon>
        <taxon>Bacillati</taxon>
        <taxon>Actinomycetota</taxon>
        <taxon>Actinomycetes</taxon>
        <taxon>Micromonosporales</taxon>
        <taxon>Micromonosporaceae</taxon>
        <taxon>Salinispora</taxon>
    </lineage>
</organism>
<protein>
    <recommendedName>
        <fullName>D-inositol 3-phosphate glycosyltransferase</fullName>
        <ecNumber evidence="1">2.4.1.250</ecNumber>
    </recommendedName>
    <alternativeName>
        <fullName evidence="1">N-acetylglucosamine-inositol-phosphate N-acetylglucosaminyltransferase</fullName>
        <shortName evidence="1">GlcNAc-Ins-P N-acetylglucosaminyltransferase</shortName>
    </alternativeName>
</protein>
<feature type="chain" id="PRO_0000400156" description="D-inositol 3-phosphate glycosyltransferase">
    <location>
        <begin position="1"/>
        <end position="482"/>
    </location>
</feature>
<feature type="binding site" evidence="1">
    <location>
        <position position="63"/>
    </location>
    <ligand>
        <name>1D-myo-inositol 3-phosphate</name>
        <dbReference type="ChEBI" id="CHEBI:58401"/>
    </ligand>
</feature>
<feature type="binding site" evidence="1">
    <location>
        <begin position="69"/>
        <end position="70"/>
    </location>
    <ligand>
        <name>UDP-N-acetyl-alpha-D-glucosamine</name>
        <dbReference type="ChEBI" id="CHEBI:57705"/>
    </ligand>
</feature>
<feature type="binding site" evidence="1">
    <location>
        <begin position="74"/>
        <end position="79"/>
    </location>
    <ligand>
        <name>1D-myo-inositol 3-phosphate</name>
        <dbReference type="ChEBI" id="CHEBI:58401"/>
    </ligand>
</feature>
<feature type="binding site" evidence="1">
    <location>
        <position position="77"/>
    </location>
    <ligand>
        <name>UDP-N-acetyl-alpha-D-glucosamine</name>
        <dbReference type="ChEBI" id="CHEBI:57705"/>
    </ligand>
</feature>
<feature type="binding site" evidence="1">
    <location>
        <position position="132"/>
    </location>
    <ligand>
        <name>1D-myo-inositol 3-phosphate</name>
        <dbReference type="ChEBI" id="CHEBI:58401"/>
    </ligand>
</feature>
<feature type="binding site" evidence="1">
    <location>
        <position position="165"/>
    </location>
    <ligand>
        <name>1D-myo-inositol 3-phosphate</name>
        <dbReference type="ChEBI" id="CHEBI:58401"/>
    </ligand>
</feature>
<feature type="binding site" evidence="1">
    <location>
        <position position="189"/>
    </location>
    <ligand>
        <name>1D-myo-inositol 3-phosphate</name>
        <dbReference type="ChEBI" id="CHEBI:58401"/>
    </ligand>
</feature>
<feature type="binding site" evidence="1">
    <location>
        <position position="209"/>
    </location>
    <ligand>
        <name>1D-myo-inositol 3-phosphate</name>
        <dbReference type="ChEBI" id="CHEBI:58401"/>
    </ligand>
</feature>
<feature type="binding site" evidence="1">
    <location>
        <position position="289"/>
    </location>
    <ligand>
        <name>UDP-N-acetyl-alpha-D-glucosamine</name>
        <dbReference type="ChEBI" id="CHEBI:57705"/>
    </ligand>
</feature>
<feature type="binding site" evidence="1">
    <location>
        <position position="294"/>
    </location>
    <ligand>
        <name>UDP-N-acetyl-alpha-D-glucosamine</name>
        <dbReference type="ChEBI" id="CHEBI:57705"/>
    </ligand>
</feature>
<feature type="binding site" evidence="1">
    <location>
        <position position="355"/>
    </location>
    <ligand>
        <name>UDP-N-acetyl-alpha-D-glucosamine</name>
        <dbReference type="ChEBI" id="CHEBI:57705"/>
    </ligand>
</feature>
<feature type="binding site" evidence="1">
    <location>
        <position position="364"/>
    </location>
    <ligand>
        <name>Mg(2+)</name>
        <dbReference type="ChEBI" id="CHEBI:18420"/>
    </ligand>
</feature>
<feature type="binding site" evidence="1">
    <location>
        <position position="365"/>
    </location>
    <ligand>
        <name>Mg(2+)</name>
        <dbReference type="ChEBI" id="CHEBI:18420"/>
    </ligand>
</feature>
<feature type="binding site" evidence="1">
    <location>
        <position position="367"/>
    </location>
    <ligand>
        <name>Mg(2+)</name>
        <dbReference type="ChEBI" id="CHEBI:18420"/>
    </ligand>
</feature>
<feature type="binding site" evidence="1">
    <location>
        <position position="377"/>
    </location>
    <ligand>
        <name>UDP-N-acetyl-alpha-D-glucosamine</name>
        <dbReference type="ChEBI" id="CHEBI:57705"/>
    </ligand>
</feature>
<feature type="binding site" evidence="1">
    <location>
        <position position="385"/>
    </location>
    <ligand>
        <name>UDP-N-acetyl-alpha-D-glucosamine</name>
        <dbReference type="ChEBI" id="CHEBI:57705"/>
    </ligand>
</feature>
<feature type="binding site" evidence="1">
    <location>
        <position position="391"/>
    </location>
    <ligand>
        <name>Mg(2+)</name>
        <dbReference type="ChEBI" id="CHEBI:18420"/>
    </ligand>
</feature>
<evidence type="ECO:0000255" key="1">
    <source>
        <dbReference type="HAMAP-Rule" id="MF_01695"/>
    </source>
</evidence>
<name>MSHA_SALTO</name>
<accession>A4X1R6</accession>
<reference key="1">
    <citation type="journal article" date="2007" name="Proc. Natl. Acad. Sci. U.S.A.">
        <title>Genome sequencing reveals complex secondary metabolome in the marine actinomycete Salinispora tropica.</title>
        <authorList>
            <person name="Udwary D.W."/>
            <person name="Zeigler L."/>
            <person name="Asolkar R.N."/>
            <person name="Singan V."/>
            <person name="Lapidus A."/>
            <person name="Fenical W."/>
            <person name="Jensen P.R."/>
            <person name="Moore B.S."/>
        </authorList>
    </citation>
    <scope>NUCLEOTIDE SEQUENCE [LARGE SCALE GENOMIC DNA]</scope>
    <source>
        <strain>ATCC BAA-916 / DSM 44818 / JCM 13857 / NBRC 105044 / CNB-440</strain>
    </source>
</reference>